<reference key="1">
    <citation type="journal article" date="2004" name="Nature">
        <title>Genome sequence of the Brown Norway rat yields insights into mammalian evolution.</title>
        <authorList>
            <person name="Gibbs R.A."/>
            <person name="Weinstock G.M."/>
            <person name="Metzker M.L."/>
            <person name="Muzny D.M."/>
            <person name="Sodergren E.J."/>
            <person name="Scherer S."/>
            <person name="Scott G."/>
            <person name="Steffen D."/>
            <person name="Worley K.C."/>
            <person name="Burch P.E."/>
            <person name="Okwuonu G."/>
            <person name="Hines S."/>
            <person name="Lewis L."/>
            <person name="Deramo C."/>
            <person name="Delgado O."/>
            <person name="Dugan-Rocha S."/>
            <person name="Miner G."/>
            <person name="Morgan M."/>
            <person name="Hawes A."/>
            <person name="Gill R."/>
            <person name="Holt R.A."/>
            <person name="Adams M.D."/>
            <person name="Amanatides P.G."/>
            <person name="Baden-Tillson H."/>
            <person name="Barnstead M."/>
            <person name="Chin S."/>
            <person name="Evans C.A."/>
            <person name="Ferriera S."/>
            <person name="Fosler C."/>
            <person name="Glodek A."/>
            <person name="Gu Z."/>
            <person name="Jennings D."/>
            <person name="Kraft C.L."/>
            <person name="Nguyen T."/>
            <person name="Pfannkoch C.M."/>
            <person name="Sitter C."/>
            <person name="Sutton G.G."/>
            <person name="Venter J.C."/>
            <person name="Woodage T."/>
            <person name="Smith D."/>
            <person name="Lee H.-M."/>
            <person name="Gustafson E."/>
            <person name="Cahill P."/>
            <person name="Kana A."/>
            <person name="Doucette-Stamm L."/>
            <person name="Weinstock K."/>
            <person name="Fechtel K."/>
            <person name="Weiss R.B."/>
            <person name="Dunn D.M."/>
            <person name="Green E.D."/>
            <person name="Blakesley R.W."/>
            <person name="Bouffard G.G."/>
            <person name="De Jong P.J."/>
            <person name="Osoegawa K."/>
            <person name="Zhu B."/>
            <person name="Marra M."/>
            <person name="Schein J."/>
            <person name="Bosdet I."/>
            <person name="Fjell C."/>
            <person name="Jones S."/>
            <person name="Krzywinski M."/>
            <person name="Mathewson C."/>
            <person name="Siddiqui A."/>
            <person name="Wye N."/>
            <person name="McPherson J."/>
            <person name="Zhao S."/>
            <person name="Fraser C.M."/>
            <person name="Shetty J."/>
            <person name="Shatsman S."/>
            <person name="Geer K."/>
            <person name="Chen Y."/>
            <person name="Abramzon S."/>
            <person name="Nierman W.C."/>
            <person name="Havlak P.H."/>
            <person name="Chen R."/>
            <person name="Durbin K.J."/>
            <person name="Egan A."/>
            <person name="Ren Y."/>
            <person name="Song X.-Z."/>
            <person name="Li B."/>
            <person name="Liu Y."/>
            <person name="Qin X."/>
            <person name="Cawley S."/>
            <person name="Cooney A.J."/>
            <person name="D'Souza L.M."/>
            <person name="Martin K."/>
            <person name="Wu J.Q."/>
            <person name="Gonzalez-Garay M.L."/>
            <person name="Jackson A.R."/>
            <person name="Kalafus K.J."/>
            <person name="McLeod M.P."/>
            <person name="Milosavljevic A."/>
            <person name="Virk D."/>
            <person name="Volkov A."/>
            <person name="Wheeler D.A."/>
            <person name="Zhang Z."/>
            <person name="Bailey J.A."/>
            <person name="Eichler E.E."/>
            <person name="Tuzun E."/>
            <person name="Birney E."/>
            <person name="Mongin E."/>
            <person name="Ureta-Vidal A."/>
            <person name="Woodwark C."/>
            <person name="Zdobnov E."/>
            <person name="Bork P."/>
            <person name="Suyama M."/>
            <person name="Torrents D."/>
            <person name="Alexandersson M."/>
            <person name="Trask B.J."/>
            <person name="Young J.M."/>
            <person name="Huang H."/>
            <person name="Wang H."/>
            <person name="Xing H."/>
            <person name="Daniels S."/>
            <person name="Gietzen D."/>
            <person name="Schmidt J."/>
            <person name="Stevens K."/>
            <person name="Vitt U."/>
            <person name="Wingrove J."/>
            <person name="Camara F."/>
            <person name="Mar Alba M."/>
            <person name="Abril J.F."/>
            <person name="Guigo R."/>
            <person name="Smit A."/>
            <person name="Dubchak I."/>
            <person name="Rubin E.M."/>
            <person name="Couronne O."/>
            <person name="Poliakov A."/>
            <person name="Huebner N."/>
            <person name="Ganten D."/>
            <person name="Goesele C."/>
            <person name="Hummel O."/>
            <person name="Kreitler T."/>
            <person name="Lee Y.-A."/>
            <person name="Monti J."/>
            <person name="Schulz H."/>
            <person name="Zimdahl H."/>
            <person name="Himmelbauer H."/>
            <person name="Lehrach H."/>
            <person name="Jacob H.J."/>
            <person name="Bromberg S."/>
            <person name="Gullings-Handley J."/>
            <person name="Jensen-Seaman M.I."/>
            <person name="Kwitek A.E."/>
            <person name="Lazar J."/>
            <person name="Pasko D."/>
            <person name="Tonellato P.J."/>
            <person name="Twigger S."/>
            <person name="Ponting C.P."/>
            <person name="Duarte J.M."/>
            <person name="Rice S."/>
            <person name="Goodstadt L."/>
            <person name="Beatson S.A."/>
            <person name="Emes R.D."/>
            <person name="Winter E.E."/>
            <person name="Webber C."/>
            <person name="Brandt P."/>
            <person name="Nyakatura G."/>
            <person name="Adetobi M."/>
            <person name="Chiaromonte F."/>
            <person name="Elnitski L."/>
            <person name="Eswara P."/>
            <person name="Hardison R.C."/>
            <person name="Hou M."/>
            <person name="Kolbe D."/>
            <person name="Makova K."/>
            <person name="Miller W."/>
            <person name="Nekrutenko A."/>
            <person name="Riemer C."/>
            <person name="Schwartz S."/>
            <person name="Taylor J."/>
            <person name="Yang S."/>
            <person name="Zhang Y."/>
            <person name="Lindpaintner K."/>
            <person name="Andrews T.D."/>
            <person name="Caccamo M."/>
            <person name="Clamp M."/>
            <person name="Clarke L."/>
            <person name="Curwen V."/>
            <person name="Durbin R.M."/>
            <person name="Eyras E."/>
            <person name="Searle S.M."/>
            <person name="Cooper G.M."/>
            <person name="Batzoglou S."/>
            <person name="Brudno M."/>
            <person name="Sidow A."/>
            <person name="Stone E.A."/>
            <person name="Payseur B.A."/>
            <person name="Bourque G."/>
            <person name="Lopez-Otin C."/>
            <person name="Puente X.S."/>
            <person name="Chakrabarti K."/>
            <person name="Chatterji S."/>
            <person name="Dewey C."/>
            <person name="Pachter L."/>
            <person name="Bray N."/>
            <person name="Yap V.B."/>
            <person name="Caspi A."/>
            <person name="Tesler G."/>
            <person name="Pevzner P.A."/>
            <person name="Haussler D."/>
            <person name="Roskin K.M."/>
            <person name="Baertsch R."/>
            <person name="Clawson H."/>
            <person name="Furey T.S."/>
            <person name="Hinrichs A.S."/>
            <person name="Karolchik D."/>
            <person name="Kent W.J."/>
            <person name="Rosenbloom K.R."/>
            <person name="Trumbower H."/>
            <person name="Weirauch M."/>
            <person name="Cooper D.N."/>
            <person name="Stenson P.D."/>
            <person name="Ma B."/>
            <person name="Brent M."/>
            <person name="Arumugam M."/>
            <person name="Shteynberg D."/>
            <person name="Copley R.R."/>
            <person name="Taylor M.S."/>
            <person name="Riethman H."/>
            <person name="Mudunuri U."/>
            <person name="Peterson J."/>
            <person name="Guyer M."/>
            <person name="Felsenfeld A."/>
            <person name="Old S."/>
            <person name="Mockrin S."/>
            <person name="Collins F.S."/>
        </authorList>
    </citation>
    <scope>NUCLEOTIDE SEQUENCE [LARGE SCALE GENOMIC DNA]</scope>
    <source>
        <strain>Brown Norway</strain>
    </source>
</reference>
<reference key="2">
    <citation type="submission" date="2003-05" db="EMBL/GenBank/DDBJ databases">
        <title>Amgen rat EST program.</title>
        <authorList>
            <consortium name="Amgen EST program"/>
        </authorList>
    </citation>
    <scope>NUCLEOTIDE SEQUENCE [LARGE SCALE MRNA] OF 1-103</scope>
</reference>
<protein>
    <recommendedName>
        <fullName>Neuropeptide S receptor</fullName>
    </recommendedName>
    <alternativeName>
        <fullName>G-protein coupled receptor 154</fullName>
    </alternativeName>
</protein>
<evidence type="ECO:0000250" key="1">
    <source>
        <dbReference type="UniProtKB" id="Q6W5P4"/>
    </source>
</evidence>
<evidence type="ECO:0000255" key="2"/>
<evidence type="ECO:0000255" key="3">
    <source>
        <dbReference type="PROSITE-ProRule" id="PRU00521"/>
    </source>
</evidence>
<gene>
    <name type="primary">Npsr1</name>
    <name type="synonym">Gpr154</name>
</gene>
<name>NPSR1_RAT</name>
<accession>P0C0L6</accession>
<proteinExistence type="evidence at transcript level"/>
<feature type="chain" id="PRO_0000069642" description="Neuropeptide S receptor">
    <location>
        <begin position="1"/>
        <end position="372"/>
    </location>
</feature>
<feature type="topological domain" description="Extracellular" evidence="2">
    <location>
        <begin position="1"/>
        <end position="52"/>
    </location>
</feature>
<feature type="transmembrane region" description="Helical; Name=1" evidence="2">
    <location>
        <begin position="53"/>
        <end position="73"/>
    </location>
</feature>
<feature type="topological domain" description="Cytoplasmic" evidence="2">
    <location>
        <begin position="74"/>
        <end position="82"/>
    </location>
</feature>
<feature type="transmembrane region" description="Helical; Name=2" evidence="2">
    <location>
        <begin position="83"/>
        <end position="103"/>
    </location>
</feature>
<feature type="topological domain" description="Extracellular" evidence="2">
    <location>
        <begin position="104"/>
        <end position="122"/>
    </location>
</feature>
<feature type="transmembrane region" description="Helical; Name=3" evidence="2">
    <location>
        <begin position="123"/>
        <end position="143"/>
    </location>
</feature>
<feature type="topological domain" description="Cytoplasmic" evidence="2">
    <location>
        <begin position="144"/>
        <end position="165"/>
    </location>
</feature>
<feature type="transmembrane region" description="Helical; Name=4" evidence="2">
    <location>
        <begin position="166"/>
        <end position="186"/>
    </location>
</feature>
<feature type="topological domain" description="Extracellular" evidence="2">
    <location>
        <begin position="187"/>
        <end position="213"/>
    </location>
</feature>
<feature type="transmembrane region" description="Helical; Name=5" evidence="2">
    <location>
        <begin position="214"/>
        <end position="234"/>
    </location>
</feature>
<feature type="topological domain" description="Cytoplasmic" evidence="2">
    <location>
        <begin position="235"/>
        <end position="276"/>
    </location>
</feature>
<feature type="transmembrane region" description="Helical; Name=6" evidence="2">
    <location>
        <begin position="277"/>
        <end position="297"/>
    </location>
</feature>
<feature type="topological domain" description="Extracellular" evidence="2">
    <location>
        <begin position="298"/>
        <end position="313"/>
    </location>
</feature>
<feature type="transmembrane region" description="Helical; Name=7" evidence="2">
    <location>
        <begin position="314"/>
        <end position="334"/>
    </location>
</feature>
<feature type="topological domain" description="Cytoplasmic" evidence="2">
    <location>
        <begin position="335"/>
        <end position="372"/>
    </location>
</feature>
<feature type="glycosylation site" description="N-linked (GlcNAc...) asparagine" evidence="2">
    <location>
        <position position="4"/>
    </location>
</feature>
<feature type="glycosylation site" description="N-linked (GlcNAc...) asparagine" evidence="2">
    <location>
        <position position="13"/>
    </location>
</feature>
<feature type="disulfide bond" evidence="3">
    <location>
        <begin position="121"/>
        <end position="198"/>
    </location>
</feature>
<comment type="function">
    <text evidence="1">G-protein coupled receptor for neuropeptide S (NPS). Promotes mobilization of intracellular Ca(2+) stores. Inhibits cell growth in response to NPS binding. Involved in pathogenesis of asthma and other IgE-mediated diseases.</text>
</comment>
<comment type="subcellular location">
    <subcellularLocation>
        <location evidence="1">Cell membrane</location>
        <topology evidence="1">Multi-pass membrane protein</topology>
    </subcellularLocation>
</comment>
<comment type="similarity">
    <text evidence="3">Belongs to the G-protein coupled receptor 1 family. Vasopressin/oxytocin receptor subfamily.</text>
</comment>
<organism>
    <name type="scientific">Rattus norvegicus</name>
    <name type="common">Rat</name>
    <dbReference type="NCBI Taxonomy" id="10116"/>
    <lineage>
        <taxon>Eukaryota</taxon>
        <taxon>Metazoa</taxon>
        <taxon>Chordata</taxon>
        <taxon>Craniata</taxon>
        <taxon>Vertebrata</taxon>
        <taxon>Euteleostomi</taxon>
        <taxon>Mammalia</taxon>
        <taxon>Eutheria</taxon>
        <taxon>Euarchontoglires</taxon>
        <taxon>Glires</taxon>
        <taxon>Rodentia</taxon>
        <taxon>Myomorpha</taxon>
        <taxon>Muroidea</taxon>
        <taxon>Muridae</taxon>
        <taxon>Murinae</taxon>
        <taxon>Rattus</taxon>
    </lineage>
</organism>
<dbReference type="EMBL" id="AABR03062350">
    <property type="status" value="NOT_ANNOTATED_CDS"/>
    <property type="molecule type" value="Genomic_DNA"/>
</dbReference>
<dbReference type="EMBL" id="AABR03063281">
    <property type="status" value="NOT_ANNOTATED_CDS"/>
    <property type="molecule type" value="Genomic_DNA"/>
</dbReference>
<dbReference type="EMBL" id="AABR03064185">
    <property type="status" value="NOT_ANNOTATED_CDS"/>
    <property type="molecule type" value="Genomic_DNA"/>
</dbReference>
<dbReference type="EMBL" id="CB812328">
    <property type="status" value="NOT_ANNOTATED_CDS"/>
    <property type="molecule type" value="mRNA"/>
</dbReference>
<dbReference type="SMR" id="P0C0L6"/>
<dbReference type="FunCoup" id="P0C0L6">
    <property type="interactions" value="134"/>
</dbReference>
<dbReference type="STRING" id="10116.ENSRNOP00000021625"/>
<dbReference type="ChEMBL" id="CHEMBL3308949"/>
<dbReference type="GuidetoPHARMACOLOGY" id="302"/>
<dbReference type="GlyCosmos" id="P0C0L6">
    <property type="glycosylation" value="2 sites, No reported glycans"/>
</dbReference>
<dbReference type="GlyGen" id="P0C0L6">
    <property type="glycosylation" value="2 sites"/>
</dbReference>
<dbReference type="PhosphoSitePlus" id="P0C0L6"/>
<dbReference type="PaxDb" id="10116-ENSRNOP00000021625"/>
<dbReference type="Ensembl" id="ENSRNOT00000021625.7">
    <property type="protein sequence ID" value="ENSRNOP00000021625.7"/>
    <property type="gene ID" value="ENSRNOG00000015863.7"/>
</dbReference>
<dbReference type="UCSC" id="RGD:1564154">
    <property type="organism name" value="rat"/>
</dbReference>
<dbReference type="AGR" id="RGD:1564154"/>
<dbReference type="RGD" id="1564154">
    <property type="gene designation" value="Npsr1"/>
</dbReference>
<dbReference type="eggNOG" id="KOG3184">
    <property type="taxonomic scope" value="Eukaryota"/>
</dbReference>
<dbReference type="eggNOG" id="KOG3656">
    <property type="taxonomic scope" value="Eukaryota"/>
</dbReference>
<dbReference type="GeneTree" id="ENSGT00940000155094"/>
<dbReference type="HOGENOM" id="CLU_009579_15_0_1"/>
<dbReference type="InParanoid" id="P0C0L6"/>
<dbReference type="OMA" id="NRLCPPF"/>
<dbReference type="OrthoDB" id="5987909at2759"/>
<dbReference type="PhylomeDB" id="P0C0L6"/>
<dbReference type="TreeFam" id="TF106499"/>
<dbReference type="Reactome" id="R-RNO-375276">
    <property type="pathway name" value="Peptide ligand-binding receptors"/>
</dbReference>
<dbReference type="Reactome" id="R-RNO-416476">
    <property type="pathway name" value="G alpha (q) signalling events"/>
</dbReference>
<dbReference type="PRO" id="PR:P0C0L6"/>
<dbReference type="Proteomes" id="UP000002494">
    <property type="component" value="Chromosome 8"/>
</dbReference>
<dbReference type="GO" id="GO:0005737">
    <property type="term" value="C:cytoplasm"/>
    <property type="evidence" value="ECO:0000266"/>
    <property type="project" value="RGD"/>
</dbReference>
<dbReference type="GO" id="GO:0005886">
    <property type="term" value="C:plasma membrane"/>
    <property type="evidence" value="ECO:0000250"/>
    <property type="project" value="UniProtKB"/>
</dbReference>
<dbReference type="GO" id="GO:0008188">
    <property type="term" value="F:neuropeptide receptor activity"/>
    <property type="evidence" value="ECO:0000250"/>
    <property type="project" value="UniProtKB"/>
</dbReference>
<dbReference type="GO" id="GO:0005000">
    <property type="term" value="F:vasopressin receptor activity"/>
    <property type="evidence" value="ECO:0007669"/>
    <property type="project" value="InterPro"/>
</dbReference>
<dbReference type="GO" id="GO:0042755">
    <property type="term" value="P:eating behavior"/>
    <property type="evidence" value="ECO:0000315"/>
    <property type="project" value="RGD"/>
</dbReference>
<dbReference type="GO" id="GO:2000293">
    <property type="term" value="P:negative regulation of defecation"/>
    <property type="evidence" value="ECO:0000315"/>
    <property type="project" value="RGD"/>
</dbReference>
<dbReference type="GO" id="GO:1903999">
    <property type="term" value="P:negative regulation of eating behavior"/>
    <property type="evidence" value="ECO:0000315"/>
    <property type="project" value="RGD"/>
</dbReference>
<dbReference type="GO" id="GO:0007218">
    <property type="term" value="P:neuropeptide signaling pathway"/>
    <property type="evidence" value="ECO:0000250"/>
    <property type="project" value="UniProtKB"/>
</dbReference>
<dbReference type="GO" id="GO:0070374">
    <property type="term" value="P:positive regulation of ERK1 and ERK2 cascade"/>
    <property type="evidence" value="ECO:0000315"/>
    <property type="project" value="RGD"/>
</dbReference>
<dbReference type="GO" id="GO:0051281">
    <property type="term" value="P:positive regulation of release of sequestered calcium ion into cytosol"/>
    <property type="evidence" value="ECO:0000250"/>
    <property type="project" value="UniProtKB"/>
</dbReference>
<dbReference type="GO" id="GO:0060013">
    <property type="term" value="P:righting reflex"/>
    <property type="evidence" value="ECO:0000315"/>
    <property type="project" value="RGD"/>
</dbReference>
<dbReference type="CDD" id="cd15197">
    <property type="entry name" value="7tmA_NPSR"/>
    <property type="match status" value="1"/>
</dbReference>
<dbReference type="FunFam" id="1.20.1070.10:FF:000188">
    <property type="entry name" value="Neuropeptide S receptor"/>
    <property type="match status" value="1"/>
</dbReference>
<dbReference type="Gene3D" id="1.20.1070.10">
    <property type="entry name" value="Rhodopsin 7-helix transmembrane proteins"/>
    <property type="match status" value="1"/>
</dbReference>
<dbReference type="InterPro" id="IPR000276">
    <property type="entry name" value="GPCR_Rhodpsn"/>
</dbReference>
<dbReference type="InterPro" id="IPR017452">
    <property type="entry name" value="GPCR_Rhodpsn_7TM"/>
</dbReference>
<dbReference type="InterPro" id="IPR027294">
    <property type="entry name" value="NPS_rcpt"/>
</dbReference>
<dbReference type="InterPro" id="IPR001817">
    <property type="entry name" value="Vasoprsn_rcpt"/>
</dbReference>
<dbReference type="PANTHER" id="PTHR24244">
    <property type="entry name" value="NEUROPEPTIDE S RECEPTOR"/>
    <property type="match status" value="1"/>
</dbReference>
<dbReference type="PANTHER" id="PTHR24244:SF2">
    <property type="entry name" value="NEUROPEPTIDE S RECEPTOR"/>
    <property type="match status" value="1"/>
</dbReference>
<dbReference type="Pfam" id="PF00001">
    <property type="entry name" value="7tm_1"/>
    <property type="match status" value="1"/>
</dbReference>
<dbReference type="PRINTS" id="PR00237">
    <property type="entry name" value="GPCRRHODOPSN"/>
</dbReference>
<dbReference type="PRINTS" id="PR00896">
    <property type="entry name" value="VASOPRESSINR"/>
</dbReference>
<dbReference type="SUPFAM" id="SSF81321">
    <property type="entry name" value="Family A G protein-coupled receptor-like"/>
    <property type="match status" value="1"/>
</dbReference>
<dbReference type="PROSITE" id="PS00237">
    <property type="entry name" value="G_PROTEIN_RECEP_F1_1"/>
    <property type="match status" value="1"/>
</dbReference>
<dbReference type="PROSITE" id="PS50262">
    <property type="entry name" value="G_PROTEIN_RECEP_F1_2"/>
    <property type="match status" value="1"/>
</dbReference>
<keyword id="KW-1003">Cell membrane</keyword>
<keyword id="KW-1015">Disulfide bond</keyword>
<keyword id="KW-0297">G-protein coupled receptor</keyword>
<keyword id="KW-0325">Glycoprotein</keyword>
<keyword id="KW-0472">Membrane</keyword>
<keyword id="KW-0675">Receptor</keyword>
<keyword id="KW-1185">Reference proteome</keyword>
<keyword id="KW-0807">Transducer</keyword>
<keyword id="KW-0812">Transmembrane</keyword>
<keyword id="KW-1133">Transmembrane helix</keyword>
<sequence length="372" mass="42638">MPANLTEGSFHANQTVPMLDSSPVACTEIVTFTEALEAEEWGSFYSSFKTEQLITLWVLFVFTIVGNSVVLFSTWRRKRKSRMTFFVTQLAITDSFTGLINILTDIIWRFTGDFMAPDLVCRIVRYLQVVLLYASTYVLVSLSIDRYHAIVYPMKFLQGAEKQAKVLIGIAWSLSFLFSIPTLIIFGKRTLSNGEVQCWALWPDDSYWTPYMTIVAFLVYFIPLTIISVIYGLVIRTIWIKSKAHETVISNCSDGELCCSYNRGLISKAKIKAIKYSIVIILAFICCWSPYFLFDMLDNFNLLPDTKERFYASVIIQNLPALNSAINPLIYCIFSGSLCSPCKVQRSQDSRMTYRERSERHEMQILSKPEFI</sequence>